<keyword id="KW-0131">Cell cycle</keyword>
<keyword id="KW-0132">Cell division</keyword>
<keyword id="KW-0137">Centromere</keyword>
<keyword id="KW-0158">Chromosome</keyword>
<keyword id="KW-0159">Chromosome partition</keyword>
<keyword id="KW-0963">Cytoplasm</keyword>
<keyword id="KW-0206">Cytoskeleton</keyword>
<keyword id="KW-0479">Metal-binding</keyword>
<keyword id="KW-0498">Mitosis</keyword>
<keyword id="KW-0539">Nucleus</keyword>
<keyword id="KW-0597">Phosphoprotein</keyword>
<keyword id="KW-1185">Reference proteome</keyword>
<keyword id="KW-0832">Ubl conjugation</keyword>
<keyword id="KW-0862">Zinc</keyword>
<accession>Q8JGN5</accession>
<accession>Q4V7U0</accession>
<accession>Q50L40</accession>
<accession>Q8JG75</accession>
<gene>
    <name type="primary">birc5.1-a</name>
    <name evidence="18" type="synonym">bir1-A</name>
    <name evidence="16" type="synonym">svv1</name>
</gene>
<organism>
    <name type="scientific">Xenopus laevis</name>
    <name type="common">African clawed frog</name>
    <dbReference type="NCBI Taxonomy" id="8355"/>
    <lineage>
        <taxon>Eukaryota</taxon>
        <taxon>Metazoa</taxon>
        <taxon>Chordata</taxon>
        <taxon>Craniata</taxon>
        <taxon>Vertebrata</taxon>
        <taxon>Euteleostomi</taxon>
        <taxon>Amphibia</taxon>
        <taxon>Batrachia</taxon>
        <taxon>Anura</taxon>
        <taxon>Pipoidea</taxon>
        <taxon>Pipidae</taxon>
        <taxon>Xenopodinae</taxon>
        <taxon>Xenopus</taxon>
        <taxon>Xenopus</taxon>
    </lineage>
</organism>
<sequence length="160" mass="18686">MYSAKNRFVQAVQRLQDFKNMYDYDARLATFADWPFTENCKCTPESMAKAGFVHCPTENEPDVACCFFCLKELEGWEPDDDPWTEHSKRSANCGFLSLTKCVNDLTMEGFLRLEGDRIKSFYRKFSTVVLQYVEEEMTAATKRLLEYFSNQHHCSIDLDH</sequence>
<reference evidence="17 20" key="1">
    <citation type="journal article" date="2002" name="Genes Dev.">
        <title>Cohesin release is required for sister chromatid resolution, but not for condensin-mediated compaction, at the onset of mitosis.</title>
        <authorList>
            <person name="Losada A."/>
            <person name="Hirano M."/>
            <person name="Hirano T."/>
        </authorList>
    </citation>
    <scope>NUCLEOTIDE SEQUENCE [MRNA]</scope>
    <scope>IDENTIFICATION IN A COMPLEX WITH AURKB AND INCENP</scope>
    <scope>SUBCELLULAR LOCATION</scope>
    <scope>DEVELOPMENTAL STAGE</scope>
    <source>
        <tissue evidence="6">Oocyte</tissue>
    </source>
</reference>
<reference evidence="17 21" key="2">
    <citation type="journal article" date="2002" name="Mol. Biol. Cell">
        <title>Aurora B kinase exists in a complex with survivin and INCENP and its kinase activity is stimulated by survivin binding and phosphorylation.</title>
        <authorList>
            <person name="Bolton M.A."/>
            <person name="Lan W."/>
            <person name="Powers S.E."/>
            <person name="McCleland M.L."/>
            <person name="Kuang J."/>
            <person name="Stukenberg P.T."/>
        </authorList>
    </citation>
    <scope>NUCLEOTIDE SEQUENCE [MRNA]</scope>
    <scope>FUNCTION</scope>
    <scope>INTERACTION WITH INCENP</scope>
    <scope>PUTATIVE INTERACTION WITH AURKB</scope>
    <scope>IDENTIFICATION IN A COMPLEX WITH AURKB AND INCENP</scope>
    <source>
        <tissue evidence="5">Gastrula</tissue>
    </source>
</reference>
<reference evidence="17 22" key="3">
    <citation type="journal article" date="2005" name="FEBS J.">
        <title>Apoptosis-inhibiting activities of BIR family proteins in Xenopus egg extracts.</title>
        <authorList>
            <person name="Tsuchiya Y."/>
            <person name="Murai S."/>
            <person name="Yamashita S."/>
        </authorList>
    </citation>
    <scope>NUCLEOTIDE SEQUENCE [MRNA]</scope>
    <scope>LACK OF ANTI-APOPTOTIC FUNCTION</scope>
    <source>
        <tissue evidence="8">Oocyte</tissue>
    </source>
</reference>
<reference evidence="17" key="4">
    <citation type="journal article" date="2007" name="J. Cell. Biochem.">
        <title>Functional analysis of Survivin in spindle assembly in Xenopus egg extracts.</title>
        <authorList>
            <person name="Canovas P.M."/>
            <person name="Guadagno T.M."/>
        </authorList>
    </citation>
    <scope>NUCLEOTIDE SEQUENCE [MRNA]</scope>
    <scope>FUNCTION</scope>
    <scope>DOMAIN</scope>
    <scope>MUTAGENESIS OF THR-43</scope>
</reference>
<reference evidence="18" key="5">
    <citation type="submission" date="2005-06" db="EMBL/GenBank/DDBJ databases">
        <authorList>
            <consortium name="NIH - Xenopus Gene Collection (XGC) project"/>
        </authorList>
    </citation>
    <scope>NUCLEOTIDE SEQUENCE [LARGE SCALE MRNA]</scope>
    <source>
        <tissue evidence="19">Egg</tissue>
        <tissue evidence="18">Ovary</tissue>
    </source>
</reference>
<reference evidence="17" key="6">
    <citation type="journal article" date="2004" name="Cell">
        <title>The chromosomal passenger complex is required for chromatin-induced microtubule stabilization and spindle assembly.</title>
        <authorList>
            <person name="Sampath S.C."/>
            <person name="Ohi R."/>
            <person name="Leismann O."/>
            <person name="Salic A."/>
            <person name="Pozniakovski A."/>
            <person name="Funabiki H."/>
        </authorList>
    </citation>
    <scope>IDENTIFICATION IN A COMPLEX WITH AURKB; CDCA9 AND INCENP</scope>
</reference>
<reference evidence="17" key="7">
    <citation type="journal article" date="2005" name="Science">
        <title>Chromosome alignment and segregation regulated by ubiquitination of survivin.</title>
        <authorList>
            <person name="Vong Q.P."/>
            <person name="Cao K."/>
            <person name="Li H.Y."/>
            <person name="Iglesias P.A."/>
            <person name="Zheng Y."/>
        </authorList>
    </citation>
    <scope>INTERACTION WITH USP9X</scope>
    <scope>IDENTIFICATION IN A COMPLEX WITH USP9X; NPLOC4 AND UFD1</scope>
    <scope>IDENTIFICATION IN A COMPLEX WITH AURKB AND INCENP</scope>
</reference>
<reference evidence="17" key="8">
    <citation type="journal article" date="2007" name="Dev. Cell">
        <title>Chromosomal enrichment and activation of the aurora B pathway are coupled to spatially regulate spindle assembly.</title>
        <authorList>
            <person name="Kelly A.E."/>
            <person name="Sampath S.C."/>
            <person name="Maniar T.A."/>
            <person name="Woo E.M."/>
            <person name="Chait B.T."/>
            <person name="Funabiki H."/>
        </authorList>
    </citation>
    <scope>INTERACTION WITH INCENP</scope>
    <scope>IDENTIFICATION IN A COMPLEX WITH AURKB; BIRC5.2; CDCA8; CDCA9 AND INCENP</scope>
</reference>
<reference evidence="17" key="9">
    <citation type="journal article" date="2008" name="Mol. Cell. Biol.">
        <title>Regulation of the Aurora B chromosome passenger protein complex during oocyte maturation in Xenopus laevis.</title>
        <authorList>
            <person name="Yamamoto T.M."/>
            <person name="Lewellyn A.L."/>
            <person name="Maller J.L."/>
        </authorList>
    </citation>
    <scope>INDUCTION</scope>
</reference>
<reference evidence="17" key="10">
    <citation type="journal article" date="2008" name="Mol. Cell. Biol.">
        <title>A survivin-ran complex regulates spindle formation in tumor cells.</title>
        <authorList>
            <person name="Xia F."/>
            <person name="Canovas P.M."/>
            <person name="Guadagno T.M."/>
            <person name="Altieri D.C."/>
        </authorList>
    </citation>
    <scope>INTERACTION WITH RAN</scope>
</reference>
<reference evidence="17" key="11">
    <citation type="journal article" date="2005" name="Int. Rev. Cytol.">
        <title>Survivin: a protein with dual roles in mitosis and apoptosis.</title>
        <authorList>
            <person name="Wheatley S.P."/>
            <person name="McNeish I.A."/>
        </authorList>
    </citation>
    <scope>REVIEW</scope>
</reference>
<proteinExistence type="evidence at protein level"/>
<protein>
    <recommendedName>
        <fullName>Baculoviral IAP repeat-containing protein 5.1-A</fullName>
    </recommendedName>
    <alternativeName>
        <fullName evidence="18">Bir1-A protein</fullName>
        <shortName evidence="15">Survivin/XBIR1</shortName>
        <shortName evidence="15">XBIR1</shortName>
    </alternativeName>
    <alternativeName>
        <fullName>Survivin1-a</fullName>
        <shortName evidence="16">XSurvivin1</shortName>
        <shortName evidence="22">XSurvivin1A</shortName>
        <shortName evidence="16">Xsvv1</shortName>
        <shortName evidence="14">xSurvivin</shortName>
    </alternativeName>
</protein>
<feature type="chain" id="PRO_0000382461" description="Baculoviral IAP repeat-containing protein 5.1-A">
    <location>
        <begin position="1"/>
        <end position="160"/>
    </location>
</feature>
<feature type="repeat" description="BIR" evidence="3">
    <location>
        <begin position="27"/>
        <end position="97"/>
    </location>
</feature>
<feature type="binding site" evidence="2 4">
    <location>
        <position position="66"/>
    </location>
    <ligand>
        <name>Zn(2+)</name>
        <dbReference type="ChEBI" id="CHEBI:29105"/>
    </ligand>
</feature>
<feature type="binding site" evidence="2 4">
    <location>
        <position position="69"/>
    </location>
    <ligand>
        <name>Zn(2+)</name>
        <dbReference type="ChEBI" id="CHEBI:29105"/>
    </ligand>
</feature>
<feature type="binding site" evidence="2 4">
    <location>
        <position position="86"/>
    </location>
    <ligand>
        <name>Zn(2+)</name>
        <dbReference type="ChEBI" id="CHEBI:29105"/>
    </ligand>
</feature>
<feature type="binding site" evidence="2 4">
    <location>
        <position position="93"/>
    </location>
    <ligand>
        <name>Zn(2+)</name>
        <dbReference type="ChEBI" id="CHEBI:29105"/>
    </ligand>
</feature>
<feature type="modified residue" description="Phosphothreonine; by CDK1" evidence="1">
    <location>
        <position position="43"/>
    </location>
</feature>
<feature type="mutagenesis site" description="Inhibits spindle assembly." evidence="10">
    <original>T</original>
    <variation>A</variation>
    <location>
        <position position="43"/>
    </location>
</feature>
<feature type="mutagenesis site" description="Mimics phosphorylation but still inhibits spindle assembly." evidence="10">
    <original>T</original>
    <variation>E</variation>
    <location>
        <position position="43"/>
    </location>
</feature>
<feature type="sequence conflict" description="In Ref. 3; BAD98265." evidence="17" ref="3">
    <original>R</original>
    <variation>C</variation>
    <location>
        <position position="27"/>
    </location>
</feature>
<feature type="sequence conflict" description="In Ref. 2; AAM76714." evidence="17" ref="2">
    <original>H</original>
    <variation>Q</variation>
    <location>
        <position position="153"/>
    </location>
</feature>
<evidence type="ECO:0000250" key="1"/>
<evidence type="ECO:0000250" key="2">
    <source>
        <dbReference type="UniProtKB" id="O15392"/>
    </source>
</evidence>
<evidence type="ECO:0000255" key="3"/>
<evidence type="ECO:0000255" key="4">
    <source>
        <dbReference type="PROSITE-ProRule" id="PRU00029"/>
    </source>
</evidence>
<evidence type="ECO:0000269" key="5">
    <source>
    </source>
</evidence>
<evidence type="ECO:0000269" key="6">
    <source>
    </source>
</evidence>
<evidence type="ECO:0000269" key="7">
    <source>
    </source>
</evidence>
<evidence type="ECO:0000269" key="8">
    <source>
    </source>
</evidence>
<evidence type="ECO:0000269" key="9">
    <source>
    </source>
</evidence>
<evidence type="ECO:0000269" key="10">
    <source>
    </source>
</evidence>
<evidence type="ECO:0000269" key="11">
    <source>
    </source>
</evidence>
<evidence type="ECO:0000269" key="12">
    <source>
    </source>
</evidence>
<evidence type="ECO:0000269" key="13">
    <source>
    </source>
</evidence>
<evidence type="ECO:0000303" key="14">
    <source>
    </source>
</evidence>
<evidence type="ECO:0000303" key="15">
    <source>
    </source>
</evidence>
<evidence type="ECO:0000303" key="16">
    <source>
    </source>
</evidence>
<evidence type="ECO:0000305" key="17"/>
<evidence type="ECO:0000312" key="18">
    <source>
        <dbReference type="EMBL" id="AAH73047.1"/>
    </source>
</evidence>
<evidence type="ECO:0000312" key="19">
    <source>
        <dbReference type="EMBL" id="AAH97720.1"/>
    </source>
</evidence>
<evidence type="ECO:0000312" key="20">
    <source>
        <dbReference type="EMBL" id="AAM44085.1"/>
    </source>
</evidence>
<evidence type="ECO:0000312" key="21">
    <source>
        <dbReference type="EMBL" id="AAM76714.1"/>
    </source>
</evidence>
<evidence type="ECO:0000312" key="22">
    <source>
        <dbReference type="EMBL" id="BAD98265.1"/>
    </source>
</evidence>
<comment type="function">
    <text evidence="5 8 10">Component of the chromosomal passenger complex (CPC), a complex that acts as a key regulator of mitosis. The CPC complex has essential functions at the centromere in ensuring correct chromosome alignment and segregation and is required for chromatin-induced microtubule stabilization and spindle assembly. Stimulates the mitotic kinase activity of aurkb/aurora-B in the CPC. Does not appear to exhibit anti-apoptotic activity.</text>
</comment>
<comment type="subunit">
    <text evidence="5 6 7 9 11 13">Component of the CPC at least composed of survivin/birc5, incenp, cdca8/borealin and/or cdca9/dasra-A, and aurkb/aurora-B. Interacts directly with incenp (via N-terminus), and may weakly interact with aurkb (via N-terminus) to stabilize the complex. Interacts with GTP-bound ran in both the S and M phases of the cell cycle. Also found in a complex with ubiquitin-mediated signaling proteins including at least usp9x/xFAM, nploc4/npl4 and ufd1.</text>
</comment>
<comment type="subcellular location">
    <subcellularLocation>
        <location evidence="2">Cytoplasm</location>
    </subcellularLocation>
    <subcellularLocation>
        <location evidence="6">Nucleus</location>
    </subcellularLocation>
    <subcellularLocation>
        <location evidence="6">Chromosome</location>
    </subcellularLocation>
    <subcellularLocation>
        <location evidence="6">Chromosome</location>
        <location evidence="6">Centromere</location>
    </subcellularLocation>
    <subcellularLocation>
        <location evidence="6">Cytoplasm</location>
        <location evidence="6">Cytoskeleton</location>
        <location evidence="6">Spindle</location>
    </subcellularLocation>
    <text evidence="2 6">Localizes on chromosome arms and inner centromeres from prophase through metaphase and then transferring to the spindle midzone and midbody from anaphase through cytokinesis.</text>
</comment>
<comment type="developmental stage">
    <text evidence="6">Expressed maternally.</text>
</comment>
<comment type="induction">
    <text evidence="12">By progesterone.</text>
</comment>
<comment type="domain">
    <text evidence="10">C-terminus is required for spindle assembly.</text>
</comment>
<comment type="PTM">
    <text evidence="2">Ubiquitination is required for centrosome-targeting.</text>
</comment>
<comment type="similarity">
    <text evidence="3">Belongs to the IAP family.</text>
</comment>
<comment type="sequence caution" evidence="17">
    <conflict type="erroneous initiation">
        <sequence resource="EMBL-CDS" id="AAH97720"/>
    </conflict>
    <text>Truncated N-terminus.</text>
</comment>
<dbReference type="EMBL" id="AY100639">
    <property type="protein sequence ID" value="AAM44085.1"/>
    <property type="molecule type" value="mRNA"/>
</dbReference>
<dbReference type="EMBL" id="AY115553">
    <property type="protein sequence ID" value="AAM76714.1"/>
    <property type="molecule type" value="mRNA"/>
</dbReference>
<dbReference type="EMBL" id="AB197247">
    <property type="protein sequence ID" value="BAD98265.1"/>
    <property type="molecule type" value="mRNA"/>
</dbReference>
<dbReference type="EMBL" id="BC073047">
    <property type="protein sequence ID" value="AAH73047.1"/>
    <property type="molecule type" value="mRNA"/>
</dbReference>
<dbReference type="EMBL" id="BC097720">
    <property type="protein sequence ID" value="AAH97720.1"/>
    <property type="status" value="ALT_INIT"/>
    <property type="molecule type" value="mRNA"/>
</dbReference>
<dbReference type="RefSeq" id="NP_001081100.1">
    <property type="nucleotide sequence ID" value="NM_001087631.1"/>
</dbReference>
<dbReference type="SMR" id="Q8JGN5"/>
<dbReference type="BioGRID" id="98984">
    <property type="interactions" value="5"/>
</dbReference>
<dbReference type="MEROPS" id="I32.005"/>
<dbReference type="iPTMnet" id="Q8JGN5"/>
<dbReference type="DNASU" id="394382"/>
<dbReference type="GeneID" id="394382"/>
<dbReference type="KEGG" id="xla:394382"/>
<dbReference type="AGR" id="Xenbase:XB-GENE-6254428"/>
<dbReference type="CTD" id="394382"/>
<dbReference type="Xenbase" id="XB-GENE-6254428">
    <property type="gene designation" value="birc5.S"/>
</dbReference>
<dbReference type="OrthoDB" id="2196114at2759"/>
<dbReference type="CD-CODE" id="735EA068">
    <property type="entry name" value="Synthetic Condensate 000330"/>
</dbReference>
<dbReference type="CD-CODE" id="A12AD357">
    <property type="entry name" value="Synthetic Condensate 000347"/>
</dbReference>
<dbReference type="Proteomes" id="UP000186698">
    <property type="component" value="Chromosome 2S"/>
</dbReference>
<dbReference type="Bgee" id="394382">
    <property type="expression patterns" value="Expressed in egg cell and 11 other cell types or tissues"/>
</dbReference>
<dbReference type="GO" id="GO:0005694">
    <property type="term" value="C:chromosome"/>
    <property type="evidence" value="ECO:0000314"/>
    <property type="project" value="UniProtKB"/>
</dbReference>
<dbReference type="GO" id="GO:0032133">
    <property type="term" value="C:chromosome passenger complex"/>
    <property type="evidence" value="ECO:0000353"/>
    <property type="project" value="UniProtKB"/>
</dbReference>
<dbReference type="GO" id="GO:0005737">
    <property type="term" value="C:cytoplasm"/>
    <property type="evidence" value="ECO:0000318"/>
    <property type="project" value="GO_Central"/>
</dbReference>
<dbReference type="GO" id="GO:0000776">
    <property type="term" value="C:kinetochore"/>
    <property type="evidence" value="ECO:0000250"/>
    <property type="project" value="UniProtKB"/>
</dbReference>
<dbReference type="GO" id="GO:0030496">
    <property type="term" value="C:midbody"/>
    <property type="evidence" value="ECO:0000250"/>
    <property type="project" value="UniProtKB"/>
</dbReference>
<dbReference type="GO" id="GO:0005634">
    <property type="term" value="C:nucleus"/>
    <property type="evidence" value="ECO:0000250"/>
    <property type="project" value="UniProtKB"/>
</dbReference>
<dbReference type="GO" id="GO:0032991">
    <property type="term" value="C:protein-containing complex"/>
    <property type="evidence" value="ECO:0000353"/>
    <property type="project" value="UniProtKB"/>
</dbReference>
<dbReference type="GO" id="GO:0051233">
    <property type="term" value="C:spindle midzone"/>
    <property type="evidence" value="ECO:0000318"/>
    <property type="project" value="GO_Central"/>
</dbReference>
<dbReference type="GO" id="GO:0046872">
    <property type="term" value="F:metal ion binding"/>
    <property type="evidence" value="ECO:0007669"/>
    <property type="project" value="UniProtKB-KW"/>
</dbReference>
<dbReference type="GO" id="GO:0019901">
    <property type="term" value="F:protein kinase binding"/>
    <property type="evidence" value="ECO:0000353"/>
    <property type="project" value="UniProtKB"/>
</dbReference>
<dbReference type="GO" id="GO:0031267">
    <property type="term" value="F:small GTPase binding"/>
    <property type="evidence" value="ECO:0000353"/>
    <property type="project" value="UniProtKB"/>
</dbReference>
<dbReference type="GO" id="GO:0007059">
    <property type="term" value="P:chromosome segregation"/>
    <property type="evidence" value="ECO:0000318"/>
    <property type="project" value="GO_Central"/>
</dbReference>
<dbReference type="GO" id="GO:0000281">
    <property type="term" value="P:mitotic cytokinesis"/>
    <property type="evidence" value="ECO:0000318"/>
    <property type="project" value="GO_Central"/>
</dbReference>
<dbReference type="GO" id="GO:0007052">
    <property type="term" value="P:mitotic spindle organization"/>
    <property type="evidence" value="ECO:0000318"/>
    <property type="project" value="GO_Central"/>
</dbReference>
<dbReference type="GO" id="GO:0043066">
    <property type="term" value="P:negative regulation of apoptotic process"/>
    <property type="evidence" value="ECO:0000250"/>
    <property type="project" value="UniProtKB"/>
</dbReference>
<dbReference type="GO" id="GO:0045892">
    <property type="term" value="P:negative regulation of DNA-templated transcription"/>
    <property type="evidence" value="ECO:0000250"/>
    <property type="project" value="UniProtKB"/>
</dbReference>
<dbReference type="GO" id="GO:0051225">
    <property type="term" value="P:spindle assembly"/>
    <property type="evidence" value="ECO:0000315"/>
    <property type="project" value="UniProtKB"/>
</dbReference>
<dbReference type="CDD" id="cd00022">
    <property type="entry name" value="BIR"/>
    <property type="match status" value="1"/>
</dbReference>
<dbReference type="FunFam" id="1.10.1170.10:FF:000009">
    <property type="entry name" value="Baculoviral IAP repeat-containing protein 5"/>
    <property type="match status" value="1"/>
</dbReference>
<dbReference type="Gene3D" id="1.10.1170.10">
    <property type="entry name" value="Inhibitor Of Apoptosis Protein (2mihbC-IAP-1), Chain A"/>
    <property type="match status" value="1"/>
</dbReference>
<dbReference type="InterPro" id="IPR051190">
    <property type="entry name" value="Baculoviral_IAP"/>
</dbReference>
<dbReference type="InterPro" id="IPR001370">
    <property type="entry name" value="BIR_rpt"/>
</dbReference>
<dbReference type="PANTHER" id="PTHR46771:SF2">
    <property type="entry name" value="BACULOVIRAL IAP REPEAT-CONTAINING PROTEIN 5.1"/>
    <property type="match status" value="1"/>
</dbReference>
<dbReference type="PANTHER" id="PTHR46771">
    <property type="entry name" value="DETERIN"/>
    <property type="match status" value="1"/>
</dbReference>
<dbReference type="Pfam" id="PF00653">
    <property type="entry name" value="BIR"/>
    <property type="match status" value="1"/>
</dbReference>
<dbReference type="SMART" id="SM00238">
    <property type="entry name" value="BIR"/>
    <property type="match status" value="1"/>
</dbReference>
<dbReference type="SUPFAM" id="SSF57924">
    <property type="entry name" value="Inhibitor of apoptosis (IAP) repeat"/>
    <property type="match status" value="1"/>
</dbReference>
<dbReference type="PROSITE" id="PS50143">
    <property type="entry name" value="BIR_REPEAT_2"/>
    <property type="match status" value="1"/>
</dbReference>
<name>BI51A_XENLA</name>